<accession>B1I4M8</accession>
<comment type="function">
    <text evidence="1">Large subunit of the glutamine-dependent carbamoyl phosphate synthetase (CPSase). CPSase catalyzes the formation of carbamoyl phosphate from the ammonia moiety of glutamine, carbonate, and phosphate donated by ATP, constituting the first step of 2 biosynthetic pathways, one leading to arginine and/or urea and the other to pyrimidine nucleotides. The large subunit (synthetase) binds the substrates ammonia (free or transferred from glutamine from the small subunit), hydrogencarbonate and ATP and carries out an ATP-coupled ligase reaction, activating hydrogencarbonate by forming carboxy phosphate which reacts with ammonia to form carbamoyl phosphate.</text>
</comment>
<comment type="catalytic activity">
    <reaction evidence="1">
        <text>hydrogencarbonate + L-glutamine + 2 ATP + H2O = carbamoyl phosphate + L-glutamate + 2 ADP + phosphate + 2 H(+)</text>
        <dbReference type="Rhea" id="RHEA:18633"/>
        <dbReference type="ChEBI" id="CHEBI:15377"/>
        <dbReference type="ChEBI" id="CHEBI:15378"/>
        <dbReference type="ChEBI" id="CHEBI:17544"/>
        <dbReference type="ChEBI" id="CHEBI:29985"/>
        <dbReference type="ChEBI" id="CHEBI:30616"/>
        <dbReference type="ChEBI" id="CHEBI:43474"/>
        <dbReference type="ChEBI" id="CHEBI:58228"/>
        <dbReference type="ChEBI" id="CHEBI:58359"/>
        <dbReference type="ChEBI" id="CHEBI:456216"/>
        <dbReference type="EC" id="6.3.5.5"/>
    </reaction>
</comment>
<comment type="catalytic activity">
    <molecule>Carbamoyl phosphate synthase large chain</molecule>
    <reaction evidence="1">
        <text>hydrogencarbonate + NH4(+) + 2 ATP = carbamoyl phosphate + 2 ADP + phosphate + 2 H(+)</text>
        <dbReference type="Rhea" id="RHEA:18029"/>
        <dbReference type="ChEBI" id="CHEBI:15378"/>
        <dbReference type="ChEBI" id="CHEBI:17544"/>
        <dbReference type="ChEBI" id="CHEBI:28938"/>
        <dbReference type="ChEBI" id="CHEBI:30616"/>
        <dbReference type="ChEBI" id="CHEBI:43474"/>
        <dbReference type="ChEBI" id="CHEBI:58228"/>
        <dbReference type="ChEBI" id="CHEBI:456216"/>
        <dbReference type="EC" id="6.3.4.16"/>
    </reaction>
</comment>
<comment type="cofactor">
    <cofactor evidence="1">
        <name>Mg(2+)</name>
        <dbReference type="ChEBI" id="CHEBI:18420"/>
    </cofactor>
    <cofactor evidence="1">
        <name>Mn(2+)</name>
        <dbReference type="ChEBI" id="CHEBI:29035"/>
    </cofactor>
    <text evidence="1">Binds 4 Mg(2+) or Mn(2+) ions per subunit.</text>
</comment>
<comment type="pathway">
    <text evidence="1">Amino-acid biosynthesis; L-arginine biosynthesis; carbamoyl phosphate from bicarbonate: step 1/1.</text>
</comment>
<comment type="pathway">
    <text evidence="1">Pyrimidine metabolism; UMP biosynthesis via de novo pathway; (S)-dihydroorotate from bicarbonate: step 1/3.</text>
</comment>
<comment type="subunit">
    <text evidence="1">Composed of two chains; the small (or glutamine) chain promotes the hydrolysis of glutamine to ammonia, which is used by the large (or ammonia) chain to synthesize carbamoyl phosphate. Tetramer of heterodimers (alpha,beta)4.</text>
</comment>
<comment type="domain">
    <text evidence="1">The large subunit is composed of 2 ATP-grasp domains that are involved in binding the 2 ATP molecules needed for carbamoyl phosphate synthesis. The N-terminal ATP-grasp domain (referred to as the carboxyphosphate synthetic component) catalyzes the ATP-dependent phosphorylation of hydrogencarbonate to carboxyphosphate and the subsequent nucleophilic attack by ammonia to form a carbamate intermediate. The C-terminal ATP-grasp domain (referred to as the carbamoyl phosphate synthetic component) then catalyzes the phosphorylation of carbamate with the second ATP to form the end product carbamoyl phosphate. The reactive and unstable enzyme intermediates are sequentially channeled from one active site to the next through the interior of the protein over a distance of at least 96 A.</text>
</comment>
<comment type="similarity">
    <text evidence="1">Belongs to the CarB family.</text>
</comment>
<evidence type="ECO:0000255" key="1">
    <source>
        <dbReference type="HAMAP-Rule" id="MF_01210"/>
    </source>
</evidence>
<keyword id="KW-0028">Amino-acid biosynthesis</keyword>
<keyword id="KW-0055">Arginine biosynthesis</keyword>
<keyword id="KW-0067">ATP-binding</keyword>
<keyword id="KW-0436">Ligase</keyword>
<keyword id="KW-0460">Magnesium</keyword>
<keyword id="KW-0464">Manganese</keyword>
<keyword id="KW-0479">Metal-binding</keyword>
<keyword id="KW-0547">Nucleotide-binding</keyword>
<keyword id="KW-0665">Pyrimidine biosynthesis</keyword>
<keyword id="KW-1185">Reference proteome</keyword>
<keyword id="KW-0677">Repeat</keyword>
<dbReference type="EC" id="6.3.4.16" evidence="1"/>
<dbReference type="EC" id="6.3.5.5" evidence="1"/>
<dbReference type="EMBL" id="CP000860">
    <property type="protein sequence ID" value="ACA59813.1"/>
    <property type="molecule type" value="Genomic_DNA"/>
</dbReference>
<dbReference type="RefSeq" id="WP_012302398.1">
    <property type="nucleotide sequence ID" value="NC_010424.1"/>
</dbReference>
<dbReference type="SMR" id="B1I4M8"/>
<dbReference type="STRING" id="477974.Daud_1302"/>
<dbReference type="KEGG" id="dau:Daud_1302"/>
<dbReference type="eggNOG" id="COG0458">
    <property type="taxonomic scope" value="Bacteria"/>
</dbReference>
<dbReference type="HOGENOM" id="CLU_000513_1_0_9"/>
<dbReference type="OrthoDB" id="9804197at2"/>
<dbReference type="UniPathway" id="UPA00068">
    <property type="reaction ID" value="UER00171"/>
</dbReference>
<dbReference type="UniPathway" id="UPA00070">
    <property type="reaction ID" value="UER00115"/>
</dbReference>
<dbReference type="Proteomes" id="UP000008544">
    <property type="component" value="Chromosome"/>
</dbReference>
<dbReference type="GO" id="GO:0005737">
    <property type="term" value="C:cytoplasm"/>
    <property type="evidence" value="ECO:0007669"/>
    <property type="project" value="TreeGrafter"/>
</dbReference>
<dbReference type="GO" id="GO:0005524">
    <property type="term" value="F:ATP binding"/>
    <property type="evidence" value="ECO:0007669"/>
    <property type="project" value="UniProtKB-UniRule"/>
</dbReference>
<dbReference type="GO" id="GO:0004087">
    <property type="term" value="F:carbamoyl-phosphate synthase (ammonia) activity"/>
    <property type="evidence" value="ECO:0007669"/>
    <property type="project" value="RHEA"/>
</dbReference>
<dbReference type="GO" id="GO:0004088">
    <property type="term" value="F:carbamoyl-phosphate synthase (glutamine-hydrolyzing) activity"/>
    <property type="evidence" value="ECO:0007669"/>
    <property type="project" value="UniProtKB-UniRule"/>
</dbReference>
<dbReference type="GO" id="GO:0046872">
    <property type="term" value="F:metal ion binding"/>
    <property type="evidence" value="ECO:0007669"/>
    <property type="project" value="UniProtKB-KW"/>
</dbReference>
<dbReference type="GO" id="GO:0044205">
    <property type="term" value="P:'de novo' UMP biosynthetic process"/>
    <property type="evidence" value="ECO:0007669"/>
    <property type="project" value="UniProtKB-UniRule"/>
</dbReference>
<dbReference type="GO" id="GO:0006541">
    <property type="term" value="P:glutamine metabolic process"/>
    <property type="evidence" value="ECO:0007669"/>
    <property type="project" value="TreeGrafter"/>
</dbReference>
<dbReference type="GO" id="GO:0006526">
    <property type="term" value="P:L-arginine biosynthetic process"/>
    <property type="evidence" value="ECO:0007669"/>
    <property type="project" value="UniProtKB-UniRule"/>
</dbReference>
<dbReference type="CDD" id="cd01424">
    <property type="entry name" value="MGS_CPS_II"/>
    <property type="match status" value="1"/>
</dbReference>
<dbReference type="FunFam" id="1.10.1030.10:FF:000002">
    <property type="entry name" value="Carbamoyl-phosphate synthase large chain"/>
    <property type="match status" value="1"/>
</dbReference>
<dbReference type="FunFam" id="3.30.1490.20:FF:000001">
    <property type="entry name" value="Carbamoyl-phosphate synthase large chain"/>
    <property type="match status" value="1"/>
</dbReference>
<dbReference type="FunFam" id="3.30.470.20:FF:000001">
    <property type="entry name" value="Carbamoyl-phosphate synthase large chain"/>
    <property type="match status" value="1"/>
</dbReference>
<dbReference type="FunFam" id="3.30.470.20:FF:000026">
    <property type="entry name" value="Carbamoyl-phosphate synthase large chain"/>
    <property type="match status" value="1"/>
</dbReference>
<dbReference type="FunFam" id="3.40.50.20:FF:000001">
    <property type="entry name" value="Carbamoyl-phosphate synthase large chain"/>
    <property type="match status" value="1"/>
</dbReference>
<dbReference type="FunFam" id="3.40.50.20:FF:000002">
    <property type="entry name" value="Carbamoyl-phosphate synthase large chain"/>
    <property type="match status" value="1"/>
</dbReference>
<dbReference type="Gene3D" id="3.40.50.20">
    <property type="match status" value="2"/>
</dbReference>
<dbReference type="Gene3D" id="3.30.470.20">
    <property type="entry name" value="ATP-grasp fold, B domain"/>
    <property type="match status" value="2"/>
</dbReference>
<dbReference type="Gene3D" id="1.10.1030.10">
    <property type="entry name" value="Carbamoyl-phosphate synthetase, large subunit oligomerisation domain"/>
    <property type="match status" value="1"/>
</dbReference>
<dbReference type="Gene3D" id="3.40.50.1380">
    <property type="entry name" value="Methylglyoxal synthase-like domain"/>
    <property type="match status" value="1"/>
</dbReference>
<dbReference type="HAMAP" id="MF_01210_A">
    <property type="entry name" value="CPSase_L_chain_A"/>
    <property type="match status" value="1"/>
</dbReference>
<dbReference type="HAMAP" id="MF_01210_B">
    <property type="entry name" value="CPSase_L_chain_B"/>
    <property type="match status" value="1"/>
</dbReference>
<dbReference type="InterPro" id="IPR011761">
    <property type="entry name" value="ATP-grasp"/>
</dbReference>
<dbReference type="InterPro" id="IPR006275">
    <property type="entry name" value="CarbamoylP_synth_lsu"/>
</dbReference>
<dbReference type="InterPro" id="IPR005480">
    <property type="entry name" value="CarbamoylP_synth_lsu_oligo"/>
</dbReference>
<dbReference type="InterPro" id="IPR036897">
    <property type="entry name" value="CarbamoylP_synth_lsu_oligo_sf"/>
</dbReference>
<dbReference type="InterPro" id="IPR005479">
    <property type="entry name" value="CbamoylP_synth_lsu-like_ATP-bd"/>
</dbReference>
<dbReference type="InterPro" id="IPR005483">
    <property type="entry name" value="CbamoylP_synth_lsu_CPSase_dom"/>
</dbReference>
<dbReference type="InterPro" id="IPR011607">
    <property type="entry name" value="MGS-like_dom"/>
</dbReference>
<dbReference type="InterPro" id="IPR036914">
    <property type="entry name" value="MGS-like_dom_sf"/>
</dbReference>
<dbReference type="InterPro" id="IPR033937">
    <property type="entry name" value="MGS_CPS_CarB"/>
</dbReference>
<dbReference type="InterPro" id="IPR016185">
    <property type="entry name" value="PreATP-grasp_dom_sf"/>
</dbReference>
<dbReference type="NCBIfam" id="TIGR01369">
    <property type="entry name" value="CPSaseII_lrg"/>
    <property type="match status" value="1"/>
</dbReference>
<dbReference type="NCBIfam" id="NF003671">
    <property type="entry name" value="PRK05294.1"/>
    <property type="match status" value="1"/>
</dbReference>
<dbReference type="NCBIfam" id="NF009455">
    <property type="entry name" value="PRK12815.1"/>
    <property type="match status" value="1"/>
</dbReference>
<dbReference type="PANTHER" id="PTHR11405:SF53">
    <property type="entry name" value="CARBAMOYL-PHOSPHATE SYNTHASE [AMMONIA], MITOCHONDRIAL"/>
    <property type="match status" value="1"/>
</dbReference>
<dbReference type="PANTHER" id="PTHR11405">
    <property type="entry name" value="CARBAMOYLTRANSFERASE FAMILY MEMBER"/>
    <property type="match status" value="1"/>
</dbReference>
<dbReference type="Pfam" id="PF02786">
    <property type="entry name" value="CPSase_L_D2"/>
    <property type="match status" value="2"/>
</dbReference>
<dbReference type="Pfam" id="PF02787">
    <property type="entry name" value="CPSase_L_D3"/>
    <property type="match status" value="1"/>
</dbReference>
<dbReference type="Pfam" id="PF02142">
    <property type="entry name" value="MGS"/>
    <property type="match status" value="1"/>
</dbReference>
<dbReference type="PRINTS" id="PR00098">
    <property type="entry name" value="CPSASE"/>
</dbReference>
<dbReference type="SMART" id="SM01096">
    <property type="entry name" value="CPSase_L_D3"/>
    <property type="match status" value="1"/>
</dbReference>
<dbReference type="SMART" id="SM00851">
    <property type="entry name" value="MGS"/>
    <property type="match status" value="1"/>
</dbReference>
<dbReference type="SUPFAM" id="SSF48108">
    <property type="entry name" value="Carbamoyl phosphate synthetase, large subunit connection domain"/>
    <property type="match status" value="1"/>
</dbReference>
<dbReference type="SUPFAM" id="SSF56059">
    <property type="entry name" value="Glutathione synthetase ATP-binding domain-like"/>
    <property type="match status" value="2"/>
</dbReference>
<dbReference type="SUPFAM" id="SSF52335">
    <property type="entry name" value="Methylglyoxal synthase-like"/>
    <property type="match status" value="1"/>
</dbReference>
<dbReference type="SUPFAM" id="SSF52440">
    <property type="entry name" value="PreATP-grasp domain"/>
    <property type="match status" value="2"/>
</dbReference>
<dbReference type="PROSITE" id="PS50975">
    <property type="entry name" value="ATP_GRASP"/>
    <property type="match status" value="2"/>
</dbReference>
<dbReference type="PROSITE" id="PS00866">
    <property type="entry name" value="CPSASE_1"/>
    <property type="match status" value="2"/>
</dbReference>
<dbReference type="PROSITE" id="PS00867">
    <property type="entry name" value="CPSASE_2"/>
    <property type="match status" value="2"/>
</dbReference>
<dbReference type="PROSITE" id="PS51855">
    <property type="entry name" value="MGS"/>
    <property type="match status" value="1"/>
</dbReference>
<name>CARB_DESAP</name>
<gene>
    <name evidence="1" type="primary">carB</name>
    <name type="ordered locus">Daud_1302</name>
</gene>
<reference key="1">
    <citation type="submission" date="2007-10" db="EMBL/GenBank/DDBJ databases">
        <title>Complete sequence of chromosome of Desulforudis audaxviator MP104C.</title>
        <authorList>
            <person name="Copeland A."/>
            <person name="Lucas S."/>
            <person name="Lapidus A."/>
            <person name="Barry K."/>
            <person name="Glavina del Rio T."/>
            <person name="Dalin E."/>
            <person name="Tice H."/>
            <person name="Bruce D."/>
            <person name="Pitluck S."/>
            <person name="Lowry S.R."/>
            <person name="Larimer F."/>
            <person name="Land M.L."/>
            <person name="Hauser L."/>
            <person name="Kyrpides N."/>
            <person name="Ivanova N.N."/>
            <person name="Richardson P."/>
        </authorList>
    </citation>
    <scope>NUCLEOTIDE SEQUENCE [LARGE SCALE GENOMIC DNA]</scope>
    <source>
        <strain>MP104C</strain>
    </source>
</reference>
<sequence>MPKDKALKKVMVIGSGPIIIGQAAEFDYAGTQACRALREEGLEVVLINSNPATIMTDANMADRIYIEPLTPEFVAKVISQERPDALLPTLGGQTGLNLAKQVADAGILDQYGVRLLGTPLESIKRAEDREHFKNMCLEIGEPVPESSIISDVDAAVAFARKIGYPVVVRPAYTLGGTGGGVAFSEDELREIAVRGLTMSIIHQVLVEKCVLGWKEIEYEVMRDAAGNCITICSMENIDPMGIHTGDSIVVAPTQTLSDREHQMLRSASLKIIRALGVEGGCNVQFALDPESYDYYVIEVNPRLSRSSALASKATGYPIAKVATKVAVGLTLDEIKNAVTGKTYACFEPALDYVVVKYPRWPFDKFSLANRNLGTQMKSTGEVMAIGRTFEEALLKAVRSLETGVTGMNLPELREWDNDRLRARMARPDDLRLFLVAEALRRGFPVNEIFELTRIDRFFLDKIKNITEAEELVRAARPTDVGTPTGVGAPAGLTPELLRRVKRIGLSDTTIAELVGTTSREVHRLRRELGVEPVYKMVDTCAGEFEATTPYYYSTYEDEDEAEPQAVRKVVVLGSGPIRIGQGIEFDYCSVHSVWALKEQGVKAIIINNNPETVSTDFDTADRLYFEPLVPEDVMNILHKEKPDGVIVQFGGQTAINLARPVEKAGFNILGTSVADIDRAEDRERFDQLVAELGIPRPPGGTGFSVEEAQRIAEQVGFPVLVRPSYVLGGRAMEIVYNSQELLEYMADAVRVTPKHPVLVDKYLLGKELEVDAVCDGETVLVPGIMEHVERAGIHSGDSIAVFPPQTLTPEIKEQLFEYTQQIARALKIRGLVNIQFVLHEGRVFVLEVNPRSSRTVPYLSKVTGIPMVNLATRICLGATLPELGYRGGLYEETRNIAVKAPVFSFAKLLDVDVCLGPEMKSTGEVMGVSKDYALALYKACLSAGYTLPSSGKAVVTIADRDKDEALPLVRSLVNLGFEIVATEGTAAFLRSRAITVEVARKVHEGSPNIVDLIRENRIHLVVNTLTKGKLTTRDGFRIRRAAVEMGVPCLTSLDTARVVIEVMRARQRGETMPLIPLQEYVS</sequence>
<proteinExistence type="inferred from homology"/>
<organism>
    <name type="scientific">Desulforudis audaxviator (strain MP104C)</name>
    <dbReference type="NCBI Taxonomy" id="477974"/>
    <lineage>
        <taxon>Bacteria</taxon>
        <taxon>Bacillati</taxon>
        <taxon>Bacillota</taxon>
        <taxon>Clostridia</taxon>
        <taxon>Thermoanaerobacterales</taxon>
        <taxon>Candidatus Desulforudaceae</taxon>
        <taxon>Candidatus Desulforudis</taxon>
    </lineage>
</organism>
<protein>
    <recommendedName>
        <fullName evidence="1">Carbamoyl phosphate synthase large chain</fullName>
        <ecNumber evidence="1">6.3.4.16</ecNumber>
        <ecNumber evidence="1">6.3.5.5</ecNumber>
    </recommendedName>
    <alternativeName>
        <fullName evidence="1">Carbamoyl phosphate synthetase ammonia chain</fullName>
    </alternativeName>
</protein>
<feature type="chain" id="PRO_1000138889" description="Carbamoyl phosphate synthase large chain">
    <location>
        <begin position="1"/>
        <end position="1082"/>
    </location>
</feature>
<feature type="domain" description="ATP-grasp 1" evidence="1">
    <location>
        <begin position="133"/>
        <end position="327"/>
    </location>
</feature>
<feature type="domain" description="ATP-grasp 2" evidence="1">
    <location>
        <begin position="686"/>
        <end position="876"/>
    </location>
</feature>
<feature type="domain" description="MGS-like" evidence="1">
    <location>
        <begin position="945"/>
        <end position="1082"/>
    </location>
</feature>
<feature type="region of interest" description="Carboxyphosphate synthetic domain" evidence="1">
    <location>
        <begin position="1"/>
        <end position="401"/>
    </location>
</feature>
<feature type="region of interest" description="Oligomerization domain" evidence="1">
    <location>
        <begin position="402"/>
        <end position="561"/>
    </location>
</feature>
<feature type="region of interest" description="Carbamoyl phosphate synthetic domain" evidence="1">
    <location>
        <begin position="562"/>
        <end position="944"/>
    </location>
</feature>
<feature type="region of interest" description="Allosteric domain" evidence="1">
    <location>
        <begin position="945"/>
        <end position="1082"/>
    </location>
</feature>
<feature type="binding site" evidence="1">
    <location>
        <position position="129"/>
    </location>
    <ligand>
        <name>ATP</name>
        <dbReference type="ChEBI" id="CHEBI:30616"/>
        <label>1</label>
    </ligand>
</feature>
<feature type="binding site" evidence="1">
    <location>
        <position position="169"/>
    </location>
    <ligand>
        <name>ATP</name>
        <dbReference type="ChEBI" id="CHEBI:30616"/>
        <label>1</label>
    </ligand>
</feature>
<feature type="binding site" evidence="1">
    <location>
        <position position="175"/>
    </location>
    <ligand>
        <name>ATP</name>
        <dbReference type="ChEBI" id="CHEBI:30616"/>
        <label>1</label>
    </ligand>
</feature>
<feature type="binding site" evidence="1">
    <location>
        <position position="176"/>
    </location>
    <ligand>
        <name>ATP</name>
        <dbReference type="ChEBI" id="CHEBI:30616"/>
        <label>1</label>
    </ligand>
</feature>
<feature type="binding site" evidence="1">
    <location>
        <position position="208"/>
    </location>
    <ligand>
        <name>ATP</name>
        <dbReference type="ChEBI" id="CHEBI:30616"/>
        <label>1</label>
    </ligand>
</feature>
<feature type="binding site" evidence="1">
    <location>
        <position position="210"/>
    </location>
    <ligand>
        <name>ATP</name>
        <dbReference type="ChEBI" id="CHEBI:30616"/>
        <label>1</label>
    </ligand>
</feature>
<feature type="binding site" evidence="1">
    <location>
        <position position="215"/>
    </location>
    <ligand>
        <name>ATP</name>
        <dbReference type="ChEBI" id="CHEBI:30616"/>
        <label>1</label>
    </ligand>
</feature>
<feature type="binding site" evidence="1">
    <location>
        <position position="241"/>
    </location>
    <ligand>
        <name>ATP</name>
        <dbReference type="ChEBI" id="CHEBI:30616"/>
        <label>1</label>
    </ligand>
</feature>
<feature type="binding site" evidence="1">
    <location>
        <position position="242"/>
    </location>
    <ligand>
        <name>ATP</name>
        <dbReference type="ChEBI" id="CHEBI:30616"/>
        <label>1</label>
    </ligand>
</feature>
<feature type="binding site" evidence="1">
    <location>
        <position position="243"/>
    </location>
    <ligand>
        <name>ATP</name>
        <dbReference type="ChEBI" id="CHEBI:30616"/>
        <label>1</label>
    </ligand>
</feature>
<feature type="binding site" evidence="1">
    <location>
        <position position="284"/>
    </location>
    <ligand>
        <name>ATP</name>
        <dbReference type="ChEBI" id="CHEBI:30616"/>
        <label>1</label>
    </ligand>
</feature>
<feature type="binding site" evidence="1">
    <location>
        <position position="284"/>
    </location>
    <ligand>
        <name>Mg(2+)</name>
        <dbReference type="ChEBI" id="CHEBI:18420"/>
        <label>1</label>
    </ligand>
</feature>
<feature type="binding site" evidence="1">
    <location>
        <position position="284"/>
    </location>
    <ligand>
        <name>Mn(2+)</name>
        <dbReference type="ChEBI" id="CHEBI:29035"/>
        <label>1</label>
    </ligand>
</feature>
<feature type="binding site" evidence="1">
    <location>
        <position position="298"/>
    </location>
    <ligand>
        <name>ATP</name>
        <dbReference type="ChEBI" id="CHEBI:30616"/>
        <label>1</label>
    </ligand>
</feature>
<feature type="binding site" evidence="1">
    <location>
        <position position="298"/>
    </location>
    <ligand>
        <name>Mg(2+)</name>
        <dbReference type="ChEBI" id="CHEBI:18420"/>
        <label>1</label>
    </ligand>
</feature>
<feature type="binding site" evidence="1">
    <location>
        <position position="298"/>
    </location>
    <ligand>
        <name>Mg(2+)</name>
        <dbReference type="ChEBI" id="CHEBI:18420"/>
        <label>2</label>
    </ligand>
</feature>
<feature type="binding site" evidence="1">
    <location>
        <position position="298"/>
    </location>
    <ligand>
        <name>Mn(2+)</name>
        <dbReference type="ChEBI" id="CHEBI:29035"/>
        <label>1</label>
    </ligand>
</feature>
<feature type="binding site" evidence="1">
    <location>
        <position position="298"/>
    </location>
    <ligand>
        <name>Mn(2+)</name>
        <dbReference type="ChEBI" id="CHEBI:29035"/>
        <label>2</label>
    </ligand>
</feature>
<feature type="binding site" evidence="1">
    <location>
        <position position="300"/>
    </location>
    <ligand>
        <name>Mg(2+)</name>
        <dbReference type="ChEBI" id="CHEBI:18420"/>
        <label>2</label>
    </ligand>
</feature>
<feature type="binding site" evidence="1">
    <location>
        <position position="300"/>
    </location>
    <ligand>
        <name>Mn(2+)</name>
        <dbReference type="ChEBI" id="CHEBI:29035"/>
        <label>2</label>
    </ligand>
</feature>
<feature type="binding site" evidence="1">
    <location>
        <position position="722"/>
    </location>
    <ligand>
        <name>ATP</name>
        <dbReference type="ChEBI" id="CHEBI:30616"/>
        <label>2</label>
    </ligand>
</feature>
<feature type="binding site" evidence="1">
    <location>
        <position position="761"/>
    </location>
    <ligand>
        <name>ATP</name>
        <dbReference type="ChEBI" id="CHEBI:30616"/>
        <label>2</label>
    </ligand>
</feature>
<feature type="binding site" evidence="1">
    <location>
        <position position="763"/>
    </location>
    <ligand>
        <name>ATP</name>
        <dbReference type="ChEBI" id="CHEBI:30616"/>
        <label>2</label>
    </ligand>
</feature>
<feature type="binding site" evidence="1">
    <location>
        <position position="767"/>
    </location>
    <ligand>
        <name>ATP</name>
        <dbReference type="ChEBI" id="CHEBI:30616"/>
        <label>2</label>
    </ligand>
</feature>
<feature type="binding site" evidence="1">
    <location>
        <position position="792"/>
    </location>
    <ligand>
        <name>ATP</name>
        <dbReference type="ChEBI" id="CHEBI:30616"/>
        <label>2</label>
    </ligand>
</feature>
<feature type="binding site" evidence="1">
    <location>
        <position position="793"/>
    </location>
    <ligand>
        <name>ATP</name>
        <dbReference type="ChEBI" id="CHEBI:30616"/>
        <label>2</label>
    </ligand>
</feature>
<feature type="binding site" evidence="1">
    <location>
        <position position="794"/>
    </location>
    <ligand>
        <name>ATP</name>
        <dbReference type="ChEBI" id="CHEBI:30616"/>
        <label>2</label>
    </ligand>
</feature>
<feature type="binding site" evidence="1">
    <location>
        <position position="795"/>
    </location>
    <ligand>
        <name>ATP</name>
        <dbReference type="ChEBI" id="CHEBI:30616"/>
        <label>2</label>
    </ligand>
</feature>
<feature type="binding site" evidence="1">
    <location>
        <position position="835"/>
    </location>
    <ligand>
        <name>ATP</name>
        <dbReference type="ChEBI" id="CHEBI:30616"/>
        <label>2</label>
    </ligand>
</feature>
<feature type="binding site" evidence="1">
    <location>
        <position position="835"/>
    </location>
    <ligand>
        <name>Mg(2+)</name>
        <dbReference type="ChEBI" id="CHEBI:18420"/>
        <label>3</label>
    </ligand>
</feature>
<feature type="binding site" evidence="1">
    <location>
        <position position="835"/>
    </location>
    <ligand>
        <name>Mn(2+)</name>
        <dbReference type="ChEBI" id="CHEBI:29035"/>
        <label>3</label>
    </ligand>
</feature>
<feature type="binding site" evidence="1">
    <location>
        <position position="847"/>
    </location>
    <ligand>
        <name>ATP</name>
        <dbReference type="ChEBI" id="CHEBI:30616"/>
        <label>2</label>
    </ligand>
</feature>
<feature type="binding site" evidence="1">
    <location>
        <position position="847"/>
    </location>
    <ligand>
        <name>Mg(2+)</name>
        <dbReference type="ChEBI" id="CHEBI:18420"/>
        <label>3</label>
    </ligand>
</feature>
<feature type="binding site" evidence="1">
    <location>
        <position position="847"/>
    </location>
    <ligand>
        <name>Mg(2+)</name>
        <dbReference type="ChEBI" id="CHEBI:18420"/>
        <label>4</label>
    </ligand>
</feature>
<feature type="binding site" evidence="1">
    <location>
        <position position="847"/>
    </location>
    <ligand>
        <name>Mn(2+)</name>
        <dbReference type="ChEBI" id="CHEBI:29035"/>
        <label>3</label>
    </ligand>
</feature>
<feature type="binding site" evidence="1">
    <location>
        <position position="847"/>
    </location>
    <ligand>
        <name>Mn(2+)</name>
        <dbReference type="ChEBI" id="CHEBI:29035"/>
        <label>4</label>
    </ligand>
</feature>
<feature type="binding site" evidence="1">
    <location>
        <position position="849"/>
    </location>
    <ligand>
        <name>Mg(2+)</name>
        <dbReference type="ChEBI" id="CHEBI:18420"/>
        <label>4</label>
    </ligand>
</feature>
<feature type="binding site" evidence="1">
    <location>
        <position position="849"/>
    </location>
    <ligand>
        <name>Mn(2+)</name>
        <dbReference type="ChEBI" id="CHEBI:29035"/>
        <label>4</label>
    </ligand>
</feature>